<comment type="function">
    <text evidence="1 2">Part of the TCR-CD3 complex present on T-lymphocyte cell surface that plays an essential role in adaptive immune response. When antigen presenting cells (APCs) activate T-cell receptor (TCR), TCR-mediated signals are transmitted across the cell membrane by the CD3 chains CD3D, CD3E, CD3G and CD3Z. All CD3 chains contain immunoreceptor tyrosine-based activation motifs (ITAMs) in their cytoplasmic domain. Upon TCR engagement, these motifs become phosphorylated by Src family protein tyrosine kinases LCK and FYN, resulting in the activation of downstream signaling pathways. In addition of this role of signal transduction in T-cell activation, CD3E plays an essential role in correct T-cell development. Also participates in internalization and cell surface down-regulation of TCR-CD3 complexes via endocytosis sequences present in CD3E cytosolic region (By similarity). In addition to its role as a TCR coreceptor, it serves as a receptor for ITPRIPL1. Ligand recognition inhibits T-cell activation by promoting interaction with NCK1, which prevents CD3E-ZAP70 interaction and blocks the ERK-NFkB signaling cascade and calcium influx (By similarity).</text>
</comment>
<comment type="subunit">
    <text evidence="1 2">The TCR-CD3 complex is composed of a CD3D/CD3E and a CD3G/CD3E heterodimers that preferentially associate with TCRalpha and TCRbeta, respectively, to form TCRalpha/CD3E/CD3G and TCRbeta/CD3G/CD3E trimers. In turn, the hexamer interacts with CD3Z homodimer to form the TCR-CD3 complex. Alternatively, TCRalpha and TCRbeta can be replaced by TCRgamma and TCRdelta. Interacts with CD6. Interacts (via Proline-rich sequence) with NCK1; the interaction is ligand dependent but independent of tyrosine kinase activation.</text>
</comment>
<comment type="subcellular location">
    <subcellularLocation>
        <location evidence="1">Cell membrane</location>
        <topology evidence="1">Single-pass type I membrane protein</topology>
    </subcellularLocation>
</comment>
<comment type="PTM">
    <text evidence="1">Phosphorylated on Tyr residues after T-cell receptor triggering by LCK in association with CD4/CD8.</text>
</comment>
<feature type="signal peptide" evidence="3">
    <location>
        <begin position="1"/>
        <end position="21"/>
    </location>
</feature>
<feature type="chain" id="PRO_0000014611" description="T-cell surface glycoprotein CD3 epsilon chain">
    <location>
        <begin position="22"/>
        <end position="198"/>
    </location>
</feature>
<feature type="topological domain" description="Extracellular" evidence="3">
    <location>
        <begin position="22"/>
        <end position="120"/>
    </location>
</feature>
<feature type="transmembrane region" description="Helical" evidence="3">
    <location>
        <begin position="121"/>
        <end position="141"/>
    </location>
</feature>
<feature type="topological domain" description="Cytoplasmic" evidence="3">
    <location>
        <begin position="142"/>
        <end position="198"/>
    </location>
</feature>
<feature type="domain" description="Ig-like">
    <location>
        <begin position="28"/>
        <end position="106"/>
    </location>
</feature>
<feature type="domain" description="ITAM" evidence="5">
    <location>
        <begin position="169"/>
        <end position="196"/>
    </location>
</feature>
<feature type="region of interest" description="Disordered" evidence="6">
    <location>
        <begin position="153"/>
        <end position="198"/>
    </location>
</feature>
<feature type="region of interest" description="NUMB-binding region" evidence="1">
    <location>
        <begin position="166"/>
        <end position="183"/>
    </location>
</feature>
<feature type="region of interest" description="Proline-rich sequence" evidence="1">
    <location>
        <begin position="170"/>
        <end position="177"/>
    </location>
</feature>
<feature type="modified residue" description="Phosphotyrosine" evidence="1 5">
    <location>
        <position position="179"/>
    </location>
</feature>
<feature type="modified residue" description="Phosphotyrosine" evidence="1 5">
    <location>
        <position position="190"/>
    </location>
</feature>
<feature type="disulfide bond" evidence="4">
    <location>
        <begin position="49"/>
        <end position="90"/>
    </location>
</feature>
<protein>
    <recommendedName>
        <fullName>T-cell surface glycoprotein CD3 epsilon chain</fullName>
    </recommendedName>
    <cdAntigenName>CD3e</cdAntigenName>
</protein>
<accession>Q9TUF9</accession>
<dbReference type="EMBL" id="AB035151">
    <property type="protein sequence ID" value="BAA86993.1"/>
    <property type="molecule type" value="mRNA"/>
</dbReference>
<dbReference type="RefSeq" id="NP_001075470.1">
    <property type="nucleotide sequence ID" value="NM_001082001.1"/>
</dbReference>
<dbReference type="SMR" id="Q9TUF9"/>
<dbReference type="DIP" id="DIP-6067N"/>
<dbReference type="FunCoup" id="Q9TUF9">
    <property type="interactions" value="86"/>
</dbReference>
<dbReference type="STRING" id="9986.ENSOCUP00000019523"/>
<dbReference type="PaxDb" id="9986-ENSOCUP00000019523"/>
<dbReference type="GeneID" id="100008616"/>
<dbReference type="KEGG" id="ocu:100008616"/>
<dbReference type="CTD" id="916"/>
<dbReference type="eggNOG" id="ENOG502S8KB">
    <property type="taxonomic scope" value="Eukaryota"/>
</dbReference>
<dbReference type="InParanoid" id="Q9TUF9"/>
<dbReference type="OrthoDB" id="9947847at2759"/>
<dbReference type="Proteomes" id="UP000001811">
    <property type="component" value="Unplaced"/>
</dbReference>
<dbReference type="GO" id="GO:0042105">
    <property type="term" value="C:alpha-beta T cell receptor complex"/>
    <property type="evidence" value="ECO:0007669"/>
    <property type="project" value="UniProtKB-ARBA"/>
</dbReference>
<dbReference type="GO" id="GO:0009897">
    <property type="term" value="C:external side of plasma membrane"/>
    <property type="evidence" value="ECO:0007669"/>
    <property type="project" value="TreeGrafter"/>
</dbReference>
<dbReference type="GO" id="GO:0004888">
    <property type="term" value="F:transmembrane signaling receptor activity"/>
    <property type="evidence" value="ECO:0007669"/>
    <property type="project" value="InterPro"/>
</dbReference>
<dbReference type="GO" id="GO:0002250">
    <property type="term" value="P:adaptive immune response"/>
    <property type="evidence" value="ECO:0007669"/>
    <property type="project" value="UniProtKB-KW"/>
</dbReference>
<dbReference type="GO" id="GO:0007166">
    <property type="term" value="P:cell surface receptor signaling pathway"/>
    <property type="evidence" value="ECO:0007669"/>
    <property type="project" value="InterPro"/>
</dbReference>
<dbReference type="GO" id="GO:0045059">
    <property type="term" value="P:positive thymic T cell selection"/>
    <property type="evidence" value="ECO:0007669"/>
    <property type="project" value="TreeGrafter"/>
</dbReference>
<dbReference type="FunFam" id="2.60.40.10:FF:001422">
    <property type="entry name" value="T-cell surface glycoprotein CD3 epsilon chain"/>
    <property type="match status" value="1"/>
</dbReference>
<dbReference type="Gene3D" id="2.60.40.10">
    <property type="entry name" value="Immunoglobulins"/>
    <property type="match status" value="1"/>
</dbReference>
<dbReference type="InterPro" id="IPR015484">
    <property type="entry name" value="CD3_esu/gsu/dsu"/>
</dbReference>
<dbReference type="InterPro" id="IPR007110">
    <property type="entry name" value="Ig-like_dom"/>
</dbReference>
<dbReference type="InterPro" id="IPR036179">
    <property type="entry name" value="Ig-like_dom_sf"/>
</dbReference>
<dbReference type="InterPro" id="IPR013783">
    <property type="entry name" value="Ig-like_fold"/>
</dbReference>
<dbReference type="InterPro" id="IPR003598">
    <property type="entry name" value="Ig_sub2"/>
</dbReference>
<dbReference type="InterPro" id="IPR003110">
    <property type="entry name" value="Phos_immunorcpt_sig_ITAM"/>
</dbReference>
<dbReference type="PANTHER" id="PTHR10570:SF9">
    <property type="entry name" value="T-CELL SURFACE GLYCOPROTEIN CD3 EPSILON CHAIN"/>
    <property type="match status" value="1"/>
</dbReference>
<dbReference type="PANTHER" id="PTHR10570">
    <property type="entry name" value="T-CELL SURFACE GLYCOPROTEIN CD3 GAMMA CHAIN / DELTA CHAIN"/>
    <property type="match status" value="1"/>
</dbReference>
<dbReference type="Pfam" id="PF16681">
    <property type="entry name" value="Ig_5"/>
    <property type="match status" value="1"/>
</dbReference>
<dbReference type="Pfam" id="PF02189">
    <property type="entry name" value="ITAM"/>
    <property type="match status" value="1"/>
</dbReference>
<dbReference type="SMART" id="SM00408">
    <property type="entry name" value="IGc2"/>
    <property type="match status" value="1"/>
</dbReference>
<dbReference type="SMART" id="SM00077">
    <property type="entry name" value="ITAM"/>
    <property type="match status" value="1"/>
</dbReference>
<dbReference type="SUPFAM" id="SSF48726">
    <property type="entry name" value="Immunoglobulin"/>
    <property type="match status" value="1"/>
</dbReference>
<dbReference type="PROSITE" id="PS50835">
    <property type="entry name" value="IG_LIKE"/>
    <property type="match status" value="1"/>
</dbReference>
<dbReference type="PROSITE" id="PS51055">
    <property type="entry name" value="ITAM_1"/>
    <property type="match status" value="1"/>
</dbReference>
<gene>
    <name type="primary">CD3E</name>
</gene>
<proteinExistence type="evidence at transcript level"/>
<organism>
    <name type="scientific">Oryctolagus cuniculus</name>
    <name type="common">Rabbit</name>
    <dbReference type="NCBI Taxonomy" id="9986"/>
    <lineage>
        <taxon>Eukaryota</taxon>
        <taxon>Metazoa</taxon>
        <taxon>Chordata</taxon>
        <taxon>Craniata</taxon>
        <taxon>Vertebrata</taxon>
        <taxon>Euteleostomi</taxon>
        <taxon>Mammalia</taxon>
        <taxon>Eutheria</taxon>
        <taxon>Euarchontoglires</taxon>
        <taxon>Glires</taxon>
        <taxon>Lagomorpha</taxon>
        <taxon>Leporidae</taxon>
        <taxon>Oryctolagus</taxon>
    </lineage>
</organism>
<name>CD3E_RABIT</name>
<reference key="1">
    <citation type="submission" date="1999-11" db="EMBL/GenBank/DDBJ databases">
        <title>Rabbit CD3 epsilon.</title>
        <authorList>
            <person name="Isono T."/>
            <person name="Nishimura M."/>
        </authorList>
    </citation>
    <scope>NUCLEOTIDE SEQUENCE [MRNA]</scope>
</reference>
<keyword id="KW-1064">Adaptive immunity</keyword>
<keyword id="KW-1003">Cell membrane</keyword>
<keyword id="KW-1015">Disulfide bond</keyword>
<keyword id="KW-0391">Immunity</keyword>
<keyword id="KW-0393">Immunoglobulin domain</keyword>
<keyword id="KW-0472">Membrane</keyword>
<keyword id="KW-0597">Phosphoprotein</keyword>
<keyword id="KW-0675">Receptor</keyword>
<keyword id="KW-1185">Reference proteome</keyword>
<keyword id="KW-0732">Signal</keyword>
<keyword id="KW-0812">Transmembrane</keyword>
<keyword id="KW-1133">Transmembrane helix</keyword>
<evidence type="ECO:0000250" key="1">
    <source>
        <dbReference type="UniProtKB" id="P07766"/>
    </source>
</evidence>
<evidence type="ECO:0000250" key="2">
    <source>
        <dbReference type="UniProtKB" id="P22646"/>
    </source>
</evidence>
<evidence type="ECO:0000255" key="3"/>
<evidence type="ECO:0000255" key="4">
    <source>
        <dbReference type="PROSITE-ProRule" id="PRU00114"/>
    </source>
</evidence>
<evidence type="ECO:0000255" key="5">
    <source>
        <dbReference type="PROSITE-ProRule" id="PRU00379"/>
    </source>
</evidence>
<evidence type="ECO:0000256" key="6">
    <source>
        <dbReference type="SAM" id="MobiDB-lite"/>
    </source>
</evidence>
<sequence>MRAGTLWRVLALWLLSVAAWGQEDDDHADDYTQKLFTVSISGTRVVLTCPVEAEGGDIHWERDEKSLPNTKKELDLTDFSEMEHSGYYSCYVGTKNKENEHILYLKARVCEACMEVDLTTVASIVVADVCVTLGLLLLVYYWSKNRKAKCKPVTRGAGAGGRPRGQNKERPPPVPNPDYEPIRKGQRDLYSGLNQRGI</sequence>